<keyword id="KW-1185">Reference proteome</keyword>
<keyword id="KW-0687">Ribonucleoprotein</keyword>
<keyword id="KW-0689">Ribosomal protein</keyword>
<name>RL34_BUCAI</name>
<feature type="chain" id="PRO_0000187355" description="Large ribosomal subunit protein bL34">
    <location>
        <begin position="1"/>
        <end position="47"/>
    </location>
</feature>
<sequence length="47" mass="5675">MKRTFQPSILKRNRSHGFRIRMATKNGRYILSRRRAKLRTRLTVSSK</sequence>
<accession>P57129</accession>
<comment type="similarity">
    <text evidence="1">Belongs to the bacterial ribosomal protein bL34 family.</text>
</comment>
<organism>
    <name type="scientific">Buchnera aphidicola subsp. Acyrthosiphon pisum (strain APS)</name>
    <name type="common">Acyrthosiphon pisum symbiotic bacterium</name>
    <dbReference type="NCBI Taxonomy" id="107806"/>
    <lineage>
        <taxon>Bacteria</taxon>
        <taxon>Pseudomonadati</taxon>
        <taxon>Pseudomonadota</taxon>
        <taxon>Gammaproteobacteria</taxon>
        <taxon>Enterobacterales</taxon>
        <taxon>Erwiniaceae</taxon>
        <taxon>Buchnera</taxon>
    </lineage>
</organism>
<protein>
    <recommendedName>
        <fullName evidence="1">Large ribosomal subunit protein bL34</fullName>
    </recommendedName>
    <alternativeName>
        <fullName>50S ribosomal protein L34</fullName>
    </alternativeName>
</protein>
<proteinExistence type="inferred from homology"/>
<evidence type="ECO:0000305" key="1"/>
<gene>
    <name type="primary">rpmH</name>
    <name type="ordered locus">BU013</name>
</gene>
<reference key="1">
    <citation type="journal article" date="2000" name="Nature">
        <title>Genome sequence of the endocellular bacterial symbiont of aphids Buchnera sp. APS.</title>
        <authorList>
            <person name="Shigenobu S."/>
            <person name="Watanabe H."/>
            <person name="Hattori M."/>
            <person name="Sakaki Y."/>
            <person name="Ishikawa H."/>
        </authorList>
    </citation>
    <scope>NUCLEOTIDE SEQUENCE [LARGE SCALE GENOMIC DNA]</scope>
    <source>
        <strain>APS</strain>
    </source>
</reference>
<dbReference type="EMBL" id="BA000003">
    <property type="protein sequence ID" value="BAB12741.1"/>
    <property type="molecule type" value="Genomic_DNA"/>
</dbReference>
<dbReference type="RefSeq" id="NP_239855.1">
    <property type="nucleotide sequence ID" value="NC_002528.1"/>
</dbReference>
<dbReference type="RefSeq" id="WP_009873975.1">
    <property type="nucleotide sequence ID" value="NZ_AP036055.1"/>
</dbReference>
<dbReference type="SMR" id="P57129"/>
<dbReference type="STRING" id="563178.BUAP5A_013"/>
<dbReference type="EnsemblBacteria" id="BAB12741">
    <property type="protein sequence ID" value="BAB12741"/>
    <property type="gene ID" value="BAB12741"/>
</dbReference>
<dbReference type="KEGG" id="buc:BU013"/>
<dbReference type="PATRIC" id="fig|107806.10.peg.26"/>
<dbReference type="eggNOG" id="COG0230">
    <property type="taxonomic scope" value="Bacteria"/>
</dbReference>
<dbReference type="HOGENOM" id="CLU_129938_2_1_6"/>
<dbReference type="Proteomes" id="UP000001806">
    <property type="component" value="Chromosome"/>
</dbReference>
<dbReference type="GO" id="GO:1990904">
    <property type="term" value="C:ribonucleoprotein complex"/>
    <property type="evidence" value="ECO:0007669"/>
    <property type="project" value="UniProtKB-KW"/>
</dbReference>
<dbReference type="GO" id="GO:0005840">
    <property type="term" value="C:ribosome"/>
    <property type="evidence" value="ECO:0007669"/>
    <property type="project" value="UniProtKB-KW"/>
</dbReference>
<dbReference type="GO" id="GO:0003735">
    <property type="term" value="F:structural constituent of ribosome"/>
    <property type="evidence" value="ECO:0007669"/>
    <property type="project" value="InterPro"/>
</dbReference>
<dbReference type="GO" id="GO:0006412">
    <property type="term" value="P:translation"/>
    <property type="evidence" value="ECO:0007669"/>
    <property type="project" value="UniProtKB-UniRule"/>
</dbReference>
<dbReference type="FunFam" id="1.10.287.3980:FF:000001">
    <property type="entry name" value="Mitochondrial ribosomal protein L34"/>
    <property type="match status" value="1"/>
</dbReference>
<dbReference type="Gene3D" id="1.10.287.3980">
    <property type="match status" value="1"/>
</dbReference>
<dbReference type="HAMAP" id="MF_00391">
    <property type="entry name" value="Ribosomal_bL34"/>
    <property type="match status" value="1"/>
</dbReference>
<dbReference type="InterPro" id="IPR000271">
    <property type="entry name" value="Ribosomal_bL34"/>
</dbReference>
<dbReference type="InterPro" id="IPR020939">
    <property type="entry name" value="Ribosomal_bL34_CS"/>
</dbReference>
<dbReference type="NCBIfam" id="TIGR01030">
    <property type="entry name" value="rpmH_bact"/>
    <property type="match status" value="1"/>
</dbReference>
<dbReference type="PANTHER" id="PTHR14503:SF4">
    <property type="entry name" value="LARGE RIBOSOMAL SUBUNIT PROTEIN BL34M"/>
    <property type="match status" value="1"/>
</dbReference>
<dbReference type="PANTHER" id="PTHR14503">
    <property type="entry name" value="MITOCHONDRIAL RIBOSOMAL PROTEIN 34 FAMILY MEMBER"/>
    <property type="match status" value="1"/>
</dbReference>
<dbReference type="Pfam" id="PF00468">
    <property type="entry name" value="Ribosomal_L34"/>
    <property type="match status" value="1"/>
</dbReference>
<dbReference type="PROSITE" id="PS00784">
    <property type="entry name" value="RIBOSOMAL_L34"/>
    <property type="match status" value="1"/>
</dbReference>